<sequence length="329" mass="35181">MFSLSFIVIAVIIVVALLILFSFVPIGLWISALAAGVHVGIGTLVGMRLRRVSPRKVIAPLIKAHKAGLALTTNQLESHYLAGGNVDRVVDANIAAQRADIDLPFERAAAIDLAGRDVLEAVQMSVNPKVIETPFIAGVAMNGIEVKAKARITVRANIARLVGGAGEETIIARVGEGIVSTIGSSKHHTEVLENPDNISKTVLSKGLDSGTAFEILSIDIADVDISKNIGADLQTEQALADKNIAQAKAEERRAMAVATEQEMKARVQEMHAKVVEAESEVPLAMAEALRSGNISVKDYYNLKNIEADTGMRNAINKRTDQSDDESPEH</sequence>
<organism>
    <name type="scientific">Staphylococcus aureus (strain MRSA252)</name>
    <dbReference type="NCBI Taxonomy" id="282458"/>
    <lineage>
        <taxon>Bacteria</taxon>
        <taxon>Bacillati</taxon>
        <taxon>Bacillota</taxon>
        <taxon>Bacilli</taxon>
        <taxon>Bacillales</taxon>
        <taxon>Staphylococcaceae</taxon>
        <taxon>Staphylococcus</taxon>
    </lineage>
</organism>
<proteinExistence type="inferred from homology"/>
<keyword id="KW-1003">Cell membrane</keyword>
<keyword id="KW-0472">Membrane</keyword>
<keyword id="KW-0812">Transmembrane</keyword>
<keyword id="KW-1133">Transmembrane helix</keyword>
<evidence type="ECO:0000255" key="1">
    <source>
        <dbReference type="HAMAP-Rule" id="MF_01562"/>
    </source>
</evidence>
<feature type="chain" id="PRO_0000232561" description="Flotillin-like protein FloA">
    <location>
        <begin position="1"/>
        <end position="329"/>
    </location>
</feature>
<feature type="transmembrane region" description="Helical" evidence="1">
    <location>
        <begin position="6"/>
        <end position="26"/>
    </location>
</feature>
<feature type="transmembrane region" description="Helical" evidence="1">
    <location>
        <begin position="27"/>
        <end position="47"/>
    </location>
</feature>
<name>FLOA_STAAR</name>
<reference key="1">
    <citation type="journal article" date="2004" name="Proc. Natl. Acad. Sci. U.S.A.">
        <title>Complete genomes of two clinical Staphylococcus aureus strains: evidence for the rapid evolution of virulence and drug resistance.</title>
        <authorList>
            <person name="Holden M.T.G."/>
            <person name="Feil E.J."/>
            <person name="Lindsay J.A."/>
            <person name="Peacock S.J."/>
            <person name="Day N.P.J."/>
            <person name="Enright M.C."/>
            <person name="Foster T.J."/>
            <person name="Moore C.E."/>
            <person name="Hurst L."/>
            <person name="Atkin R."/>
            <person name="Barron A."/>
            <person name="Bason N."/>
            <person name="Bentley S.D."/>
            <person name="Chillingworth C."/>
            <person name="Chillingworth T."/>
            <person name="Churcher C."/>
            <person name="Clark L."/>
            <person name="Corton C."/>
            <person name="Cronin A."/>
            <person name="Doggett J."/>
            <person name="Dowd L."/>
            <person name="Feltwell T."/>
            <person name="Hance Z."/>
            <person name="Harris B."/>
            <person name="Hauser H."/>
            <person name="Holroyd S."/>
            <person name="Jagels K."/>
            <person name="James K.D."/>
            <person name="Lennard N."/>
            <person name="Line A."/>
            <person name="Mayes R."/>
            <person name="Moule S."/>
            <person name="Mungall K."/>
            <person name="Ormond D."/>
            <person name="Quail M.A."/>
            <person name="Rabbinowitsch E."/>
            <person name="Rutherford K.M."/>
            <person name="Sanders M."/>
            <person name="Sharp S."/>
            <person name="Simmonds M."/>
            <person name="Stevens K."/>
            <person name="Whitehead S."/>
            <person name="Barrell B.G."/>
            <person name="Spratt B.G."/>
            <person name="Parkhill J."/>
        </authorList>
    </citation>
    <scope>NUCLEOTIDE SEQUENCE [LARGE SCALE GENOMIC DNA]</scope>
    <source>
        <strain>MRSA252</strain>
    </source>
</reference>
<gene>
    <name evidence="1" type="primary">floA</name>
    <name type="ordered locus">SAR1650</name>
</gene>
<dbReference type="EMBL" id="BX571856">
    <property type="protein sequence ID" value="CAG40645.1"/>
    <property type="molecule type" value="Genomic_DNA"/>
</dbReference>
<dbReference type="RefSeq" id="WP_000492114.1">
    <property type="nucleotide sequence ID" value="NC_002952.2"/>
</dbReference>
<dbReference type="SMR" id="Q6GGC7"/>
<dbReference type="GeneID" id="98345944"/>
<dbReference type="KEGG" id="sar:SAR1650"/>
<dbReference type="HOGENOM" id="CLU_836378_0_0_9"/>
<dbReference type="Proteomes" id="UP000000596">
    <property type="component" value="Chromosome"/>
</dbReference>
<dbReference type="GO" id="GO:0045121">
    <property type="term" value="C:membrane raft"/>
    <property type="evidence" value="ECO:0007669"/>
    <property type="project" value="UniProtKB-SubCell"/>
</dbReference>
<dbReference type="GO" id="GO:0005886">
    <property type="term" value="C:plasma membrane"/>
    <property type="evidence" value="ECO:0007669"/>
    <property type="project" value="UniProtKB-SubCell"/>
</dbReference>
<dbReference type="HAMAP" id="MF_01562">
    <property type="entry name" value="FloA"/>
    <property type="match status" value="1"/>
</dbReference>
<dbReference type="InterPro" id="IPR022853">
    <property type="entry name" value="FloA"/>
</dbReference>
<dbReference type="NCBIfam" id="NF010186">
    <property type="entry name" value="PRK13665.1"/>
    <property type="match status" value="1"/>
</dbReference>
<dbReference type="Pfam" id="PF12127">
    <property type="entry name" value="FloA"/>
    <property type="match status" value="1"/>
</dbReference>
<accession>Q6GGC7</accession>
<protein>
    <recommendedName>
        <fullName evidence="1">Flotillin-like protein FloA</fullName>
    </recommendedName>
</protein>
<comment type="function">
    <text evidence="1">Found in functional membrane microdomains (FMM) that may be equivalent to eukaryotic membrane rafts. FMMs are highly dynamic and increase in number as cells age. Flotillins are thought to be important factors in membrane fluidity.</text>
</comment>
<comment type="subunit">
    <text evidence="1">Homooligomerizes.</text>
</comment>
<comment type="subcellular location">
    <subcellularLocation>
        <location evidence="1">Cell membrane</location>
        <topology evidence="1">Multi-pass membrane protein</topology>
    </subcellularLocation>
    <subcellularLocation>
        <location evidence="1">Membrane raft</location>
        <topology evidence="1">Multi-pass membrane protein</topology>
    </subcellularLocation>
</comment>
<comment type="similarity">
    <text evidence="1">Belongs to the flotillin-like FloA family.</text>
</comment>